<evidence type="ECO:0000255" key="1">
    <source>
        <dbReference type="HAMAP-Rule" id="MF_01318"/>
    </source>
</evidence>
<evidence type="ECO:0000305" key="2"/>
<organism>
    <name type="scientific">Paracoccus denitrificans (strain Pd 1222)</name>
    <dbReference type="NCBI Taxonomy" id="318586"/>
    <lineage>
        <taxon>Bacteria</taxon>
        <taxon>Pseudomonadati</taxon>
        <taxon>Pseudomonadota</taxon>
        <taxon>Alphaproteobacteria</taxon>
        <taxon>Rhodobacterales</taxon>
        <taxon>Paracoccaceae</taxon>
        <taxon>Paracoccus</taxon>
    </lineage>
</organism>
<reference key="1">
    <citation type="submission" date="2006-12" db="EMBL/GenBank/DDBJ databases">
        <title>Complete sequence of chromosome 1 of Paracoccus denitrificans PD1222.</title>
        <authorList>
            <person name="Copeland A."/>
            <person name="Lucas S."/>
            <person name="Lapidus A."/>
            <person name="Barry K."/>
            <person name="Detter J.C."/>
            <person name="Glavina del Rio T."/>
            <person name="Hammon N."/>
            <person name="Israni S."/>
            <person name="Dalin E."/>
            <person name="Tice H."/>
            <person name="Pitluck S."/>
            <person name="Munk A.C."/>
            <person name="Brettin T."/>
            <person name="Bruce D."/>
            <person name="Han C."/>
            <person name="Tapia R."/>
            <person name="Gilna P."/>
            <person name="Schmutz J."/>
            <person name="Larimer F."/>
            <person name="Land M."/>
            <person name="Hauser L."/>
            <person name="Kyrpides N."/>
            <person name="Lykidis A."/>
            <person name="Spiro S."/>
            <person name="Richardson D.J."/>
            <person name="Moir J.W.B."/>
            <person name="Ferguson S.J."/>
            <person name="van Spanning R.J.M."/>
            <person name="Richardson P."/>
        </authorList>
    </citation>
    <scope>NUCLEOTIDE SEQUENCE [LARGE SCALE GENOMIC DNA]</scope>
    <source>
        <strain>Pd 1222</strain>
    </source>
</reference>
<accession>A1B012</accession>
<gene>
    <name evidence="1" type="primary">rplA</name>
    <name type="ordered locus">Pden_0744</name>
</gene>
<feature type="chain" id="PRO_0000308066" description="Large ribosomal subunit protein uL1">
    <location>
        <begin position="1"/>
        <end position="233"/>
    </location>
</feature>
<proteinExistence type="inferred from homology"/>
<sequence length="233" mass="24229">MAKLSKKQVSARAAFAGKSNLAVEEAVKLVKENASAKFDETVEIAMNLGVDPRHADQMVRGVVTLPNGTGKDVRVAVFARGPKADEAKAAGAEIVGAEDLMETIQSGKIEFDRCIATPDMMPLVGRLGKILGPRNLMPNPKVGTVTMDVKAAVEAAKGGEVQFKAEKAGVVHAGVGKASFEIEKLAENIRAFVDAVNRAKPSGAKGTYVKKVSISSTMGPGVSLDLGSTAAAQ</sequence>
<keyword id="KW-1185">Reference proteome</keyword>
<keyword id="KW-0678">Repressor</keyword>
<keyword id="KW-0687">Ribonucleoprotein</keyword>
<keyword id="KW-0689">Ribosomal protein</keyword>
<keyword id="KW-0694">RNA-binding</keyword>
<keyword id="KW-0699">rRNA-binding</keyword>
<keyword id="KW-0810">Translation regulation</keyword>
<keyword id="KW-0820">tRNA-binding</keyword>
<name>RL1_PARDP</name>
<dbReference type="EMBL" id="CP000489">
    <property type="protein sequence ID" value="ABL68856.1"/>
    <property type="molecule type" value="Genomic_DNA"/>
</dbReference>
<dbReference type="RefSeq" id="WP_011747089.1">
    <property type="nucleotide sequence ID" value="NC_008686.1"/>
</dbReference>
<dbReference type="SMR" id="A1B012"/>
<dbReference type="STRING" id="318586.Pden_0744"/>
<dbReference type="EnsemblBacteria" id="ABL68856">
    <property type="protein sequence ID" value="ABL68856"/>
    <property type="gene ID" value="Pden_0744"/>
</dbReference>
<dbReference type="GeneID" id="93451968"/>
<dbReference type="KEGG" id="pde:Pden_0744"/>
<dbReference type="eggNOG" id="COG0081">
    <property type="taxonomic scope" value="Bacteria"/>
</dbReference>
<dbReference type="HOGENOM" id="CLU_062853_0_0_5"/>
<dbReference type="OrthoDB" id="9803740at2"/>
<dbReference type="Proteomes" id="UP000000361">
    <property type="component" value="Chromosome 1"/>
</dbReference>
<dbReference type="GO" id="GO:0022625">
    <property type="term" value="C:cytosolic large ribosomal subunit"/>
    <property type="evidence" value="ECO:0007669"/>
    <property type="project" value="TreeGrafter"/>
</dbReference>
<dbReference type="GO" id="GO:0019843">
    <property type="term" value="F:rRNA binding"/>
    <property type="evidence" value="ECO:0007669"/>
    <property type="project" value="UniProtKB-UniRule"/>
</dbReference>
<dbReference type="GO" id="GO:0003735">
    <property type="term" value="F:structural constituent of ribosome"/>
    <property type="evidence" value="ECO:0007669"/>
    <property type="project" value="InterPro"/>
</dbReference>
<dbReference type="GO" id="GO:0000049">
    <property type="term" value="F:tRNA binding"/>
    <property type="evidence" value="ECO:0007669"/>
    <property type="project" value="UniProtKB-KW"/>
</dbReference>
<dbReference type="GO" id="GO:0006417">
    <property type="term" value="P:regulation of translation"/>
    <property type="evidence" value="ECO:0007669"/>
    <property type="project" value="UniProtKB-KW"/>
</dbReference>
<dbReference type="GO" id="GO:0006412">
    <property type="term" value="P:translation"/>
    <property type="evidence" value="ECO:0007669"/>
    <property type="project" value="UniProtKB-UniRule"/>
</dbReference>
<dbReference type="CDD" id="cd00403">
    <property type="entry name" value="Ribosomal_L1"/>
    <property type="match status" value="1"/>
</dbReference>
<dbReference type="FunFam" id="3.40.50.790:FF:000001">
    <property type="entry name" value="50S ribosomal protein L1"/>
    <property type="match status" value="1"/>
</dbReference>
<dbReference type="Gene3D" id="3.30.190.20">
    <property type="match status" value="1"/>
</dbReference>
<dbReference type="Gene3D" id="3.40.50.790">
    <property type="match status" value="1"/>
</dbReference>
<dbReference type="HAMAP" id="MF_01318_B">
    <property type="entry name" value="Ribosomal_uL1_B"/>
    <property type="match status" value="1"/>
</dbReference>
<dbReference type="InterPro" id="IPR005878">
    <property type="entry name" value="Ribosom_uL1_bac-type"/>
</dbReference>
<dbReference type="InterPro" id="IPR002143">
    <property type="entry name" value="Ribosomal_uL1"/>
</dbReference>
<dbReference type="InterPro" id="IPR023674">
    <property type="entry name" value="Ribosomal_uL1-like"/>
</dbReference>
<dbReference type="InterPro" id="IPR028364">
    <property type="entry name" value="Ribosomal_uL1/biogenesis"/>
</dbReference>
<dbReference type="InterPro" id="IPR016095">
    <property type="entry name" value="Ribosomal_uL1_3-a/b-sand"/>
</dbReference>
<dbReference type="InterPro" id="IPR023673">
    <property type="entry name" value="Ribosomal_uL1_CS"/>
</dbReference>
<dbReference type="NCBIfam" id="TIGR01169">
    <property type="entry name" value="rplA_bact"/>
    <property type="match status" value="1"/>
</dbReference>
<dbReference type="PANTHER" id="PTHR36427">
    <property type="entry name" value="54S RIBOSOMAL PROTEIN L1, MITOCHONDRIAL"/>
    <property type="match status" value="1"/>
</dbReference>
<dbReference type="PANTHER" id="PTHR36427:SF3">
    <property type="entry name" value="LARGE RIBOSOMAL SUBUNIT PROTEIN UL1M"/>
    <property type="match status" value="1"/>
</dbReference>
<dbReference type="Pfam" id="PF00687">
    <property type="entry name" value="Ribosomal_L1"/>
    <property type="match status" value="1"/>
</dbReference>
<dbReference type="PIRSF" id="PIRSF002155">
    <property type="entry name" value="Ribosomal_L1"/>
    <property type="match status" value="1"/>
</dbReference>
<dbReference type="SUPFAM" id="SSF56808">
    <property type="entry name" value="Ribosomal protein L1"/>
    <property type="match status" value="1"/>
</dbReference>
<dbReference type="PROSITE" id="PS01199">
    <property type="entry name" value="RIBOSOMAL_L1"/>
    <property type="match status" value="1"/>
</dbReference>
<protein>
    <recommendedName>
        <fullName evidence="1">Large ribosomal subunit protein uL1</fullName>
    </recommendedName>
    <alternativeName>
        <fullName evidence="2">50S ribosomal protein L1</fullName>
    </alternativeName>
</protein>
<comment type="function">
    <text evidence="1">Binds directly to 23S rRNA. The L1 stalk is quite mobile in the ribosome, and is involved in E site tRNA release.</text>
</comment>
<comment type="function">
    <text evidence="1">Protein L1 is also a translational repressor protein, it controls the translation of the L11 operon by binding to its mRNA.</text>
</comment>
<comment type="subunit">
    <text evidence="1">Part of the 50S ribosomal subunit.</text>
</comment>
<comment type="similarity">
    <text evidence="1">Belongs to the universal ribosomal protein uL1 family.</text>
</comment>